<proteinExistence type="evidence at transcript level"/>
<name>PPCEL_MACFA</name>
<sequence>MQQKTKLFLQALKYSIPHLGKCMQKQHLNHYNFADHYYNRIKLKKYHLTKCLQNKPKISELARNIPSRSFSCKDLQPVKQENEKPLPENMDAFEKVRTKLETQPQEEYEIINVEVKHGGFVYYQEGCCLVRSKDEEADNDNYEVLFNLEELKLDQPFIDCIRVAPDEKYVAAKIRTEDSEASTCVIIKLSDQPVMEASFPNVSSFEWVKDEEDEDVLFYTFQRNLRCHDVYRATFGDNKRNERFYTEKDPSYFVFLYLTKDSRFLTINIMNKTTSEVWLIDGLSPWDPPVLIQKRIHGVLYYVEHRDDELYILTNVGEPTEFKLMRTAADTPAIMNWDLFFTMKRNTKVIDLDMFKDHCVLFLKHSNLLYVNVIGLADDSVRSLKLPPWACGFIMDTNSDPKNCPFQLCSPIRSPKYYTYKFAEGKLFEETGHEDPITKTSRVLRLEAKSKDGKLVPMTVFHKTDSEDLQKKPLLIHVYGAYGMDLKMNFRPERRVLVDDGWILAYCHVRGGGELGLQWHADGRLTKKLNGLADLEACIKTLHGQGFSQPSLTTLTAFSAGGVLAGALCNCNPELLRAVTLEAPFLDVLNTMMDTTLPLTLEELEEWGNPSSDEKHKNYIKRYCPYQNIKPQHYPSVHITAYENDERVPLKGIVSYTEKLKEAISEHAKDTGEGYQAPNIILDIQPGGNHVIEDSHKKITAQIKFLYEELGLDSTSVFEDLKKYLKF</sequence>
<evidence type="ECO:0000250" key="1">
    <source>
        <dbReference type="UniProtKB" id="Q4J6C6"/>
    </source>
</evidence>
<evidence type="ECO:0000250" key="2">
    <source>
        <dbReference type="UniProtKB" id="Q8C167"/>
    </source>
</evidence>
<evidence type="ECO:0000305" key="3"/>
<dbReference type="EC" id="3.4.21.-" evidence="1"/>
<dbReference type="EMBL" id="AB168347">
    <property type="protein sequence ID" value="BAF63643.1"/>
    <property type="molecule type" value="mRNA"/>
</dbReference>
<dbReference type="SMR" id="A5LFV8"/>
<dbReference type="STRING" id="9541.ENSMFAP00000038585"/>
<dbReference type="ESTHER" id="macfa-ppcel">
    <property type="family name" value="S9N_PREPL_Peptidase_S9"/>
</dbReference>
<dbReference type="MEROPS" id="S09.015"/>
<dbReference type="eggNOG" id="KOG2237">
    <property type="taxonomic scope" value="Eukaryota"/>
</dbReference>
<dbReference type="Proteomes" id="UP000233100">
    <property type="component" value="Unplaced"/>
</dbReference>
<dbReference type="GO" id="GO:0005856">
    <property type="term" value="C:cytoskeleton"/>
    <property type="evidence" value="ECO:0007669"/>
    <property type="project" value="UniProtKB-SubCell"/>
</dbReference>
<dbReference type="GO" id="GO:0005829">
    <property type="term" value="C:cytosol"/>
    <property type="evidence" value="ECO:0007669"/>
    <property type="project" value="UniProtKB-SubCell"/>
</dbReference>
<dbReference type="GO" id="GO:0005794">
    <property type="term" value="C:Golgi apparatus"/>
    <property type="evidence" value="ECO:0007669"/>
    <property type="project" value="UniProtKB-SubCell"/>
</dbReference>
<dbReference type="GO" id="GO:0005634">
    <property type="term" value="C:nucleus"/>
    <property type="evidence" value="ECO:0007669"/>
    <property type="project" value="UniProtKB-SubCell"/>
</dbReference>
<dbReference type="GO" id="GO:0008233">
    <property type="term" value="F:peptidase activity"/>
    <property type="evidence" value="ECO:0000250"/>
    <property type="project" value="UniProtKB"/>
</dbReference>
<dbReference type="GO" id="GO:0004252">
    <property type="term" value="F:serine-type endopeptidase activity"/>
    <property type="evidence" value="ECO:0007669"/>
    <property type="project" value="InterPro"/>
</dbReference>
<dbReference type="GO" id="GO:0043001">
    <property type="term" value="P:Golgi to plasma membrane protein transport"/>
    <property type="evidence" value="ECO:0000250"/>
    <property type="project" value="UniProtKB"/>
</dbReference>
<dbReference type="GO" id="GO:0006508">
    <property type="term" value="P:proteolysis"/>
    <property type="evidence" value="ECO:0007669"/>
    <property type="project" value="UniProtKB-KW"/>
</dbReference>
<dbReference type="GO" id="GO:0042147">
    <property type="term" value="P:retrograde transport, endosome to Golgi"/>
    <property type="evidence" value="ECO:0000250"/>
    <property type="project" value="UniProtKB"/>
</dbReference>
<dbReference type="FunFam" id="2.130.10.120:FF:000002">
    <property type="entry name" value="prolyl endopeptidase-like isoform X1"/>
    <property type="match status" value="1"/>
</dbReference>
<dbReference type="FunFam" id="3.40.50.1820:FF:000050">
    <property type="entry name" value="prolyl endopeptidase-like isoform X2"/>
    <property type="match status" value="1"/>
</dbReference>
<dbReference type="Gene3D" id="3.40.50.1820">
    <property type="entry name" value="alpha/beta hydrolase"/>
    <property type="match status" value="1"/>
</dbReference>
<dbReference type="Gene3D" id="2.130.10.120">
    <property type="entry name" value="Prolyl oligopeptidase, N-terminal domain"/>
    <property type="match status" value="1"/>
</dbReference>
<dbReference type="InterPro" id="IPR029058">
    <property type="entry name" value="AB_hydrolase_fold"/>
</dbReference>
<dbReference type="InterPro" id="IPR023302">
    <property type="entry name" value="Pept_S9A_N"/>
</dbReference>
<dbReference type="InterPro" id="IPR001375">
    <property type="entry name" value="Peptidase_S9_cat"/>
</dbReference>
<dbReference type="InterPro" id="IPR002470">
    <property type="entry name" value="Peptidase_S9A"/>
</dbReference>
<dbReference type="InterPro" id="IPR051543">
    <property type="entry name" value="Serine_Peptidase_S9A"/>
</dbReference>
<dbReference type="PANTHER" id="PTHR11757:SF19">
    <property type="entry name" value="PROLYL ENDOPEPTIDASE-LIKE"/>
    <property type="match status" value="1"/>
</dbReference>
<dbReference type="PANTHER" id="PTHR11757">
    <property type="entry name" value="PROTEASE FAMILY S9A OLIGOPEPTIDASE"/>
    <property type="match status" value="1"/>
</dbReference>
<dbReference type="Pfam" id="PF00326">
    <property type="entry name" value="Peptidase_S9"/>
    <property type="match status" value="1"/>
</dbReference>
<dbReference type="Pfam" id="PF02897">
    <property type="entry name" value="Peptidase_S9_N"/>
    <property type="match status" value="1"/>
</dbReference>
<dbReference type="PRINTS" id="PR00862">
    <property type="entry name" value="PROLIGOPTASE"/>
</dbReference>
<dbReference type="SUPFAM" id="SSF53474">
    <property type="entry name" value="alpha/beta-Hydrolases"/>
    <property type="match status" value="1"/>
</dbReference>
<dbReference type="SUPFAM" id="SSF50993">
    <property type="entry name" value="Peptidase/esterase 'gauge' domain"/>
    <property type="match status" value="1"/>
</dbReference>
<reference key="1">
    <citation type="submission" date="2005-06" db="EMBL/GenBank/DDBJ databases">
        <title>DNA sequences of macaque genes expressed in brain or testis and its evolutionary implications.</title>
        <authorList>
            <consortium name="International consortium for macaque cDNA sequencing and analysis"/>
        </authorList>
    </citation>
    <scope>NUCLEOTIDE SEQUENCE [LARGE SCALE MRNA]</scope>
    <source>
        <tissue>Testis</tissue>
    </source>
</reference>
<feature type="chain" id="PRO_0000314861" description="Prolyl endopeptidase-like">
    <location>
        <begin position="1"/>
        <end position="727"/>
    </location>
</feature>
<feature type="active site" description="Charge relay system" evidence="1">
    <location>
        <position position="559"/>
    </location>
</feature>
<feature type="active site" description="Charge relay system" evidence="1">
    <location>
        <position position="645"/>
    </location>
</feature>
<feature type="active site" description="Charge relay system" evidence="1">
    <location>
        <position position="690"/>
    </location>
</feature>
<accession>A5LFV8</accession>
<comment type="function">
    <text evidence="1">Serine peptidase whose precise substrate specificity remains unclear (By similarity). Does not cleave peptides after a arginine or lysine residue (By similarity). Regulates trans-Golgi network morphology and sorting by regulating the membrane binding of the AP-1 complex (By similarity). May play a role in the regulation of synaptic vesicle exocytosis (By similarity).</text>
</comment>
<comment type="subunit">
    <text evidence="1">Homodimer (By similarity). Interacts with the AP-1 complex (By similarity).</text>
</comment>
<comment type="subcellular location">
    <subcellularLocation>
        <location evidence="1">Cytoplasm</location>
        <location evidence="1">Cytosol</location>
    </subcellularLocation>
    <subcellularLocation>
        <location evidence="2">Golgi apparatus</location>
        <location evidence="2">trans-Golgi network</location>
    </subcellularLocation>
    <subcellularLocation>
        <location evidence="2">Cytoplasm</location>
        <location evidence="2">Cytoskeleton</location>
    </subcellularLocation>
    <subcellularLocation>
        <location evidence="2">Golgi apparatus</location>
    </subcellularLocation>
    <subcellularLocation>
        <location evidence="1">Nucleus</location>
    </subcellularLocation>
    <text evidence="2">Co-localizes with AP-1 in the trans-Golgi network (By similarity). Co-localizes with MAP2 and ACTB on the cytoskeleton (By similarity). Co-localizes with STX6 and GOSR2 at the Golgi apparatus (By similarity).</text>
</comment>
<comment type="similarity">
    <text evidence="3">Belongs to the peptidase S9A family.</text>
</comment>
<keyword id="KW-0963">Cytoplasm</keyword>
<keyword id="KW-0206">Cytoskeleton</keyword>
<keyword id="KW-0333">Golgi apparatus</keyword>
<keyword id="KW-0378">Hydrolase</keyword>
<keyword id="KW-0539">Nucleus</keyword>
<keyword id="KW-0645">Protease</keyword>
<keyword id="KW-1185">Reference proteome</keyword>
<keyword id="KW-0720">Serine protease</keyword>
<gene>
    <name type="primary">PREPL</name>
    <name type="ORF">QtsA-11414</name>
</gene>
<organism>
    <name type="scientific">Macaca fascicularis</name>
    <name type="common">Crab-eating macaque</name>
    <name type="synonym">Cynomolgus monkey</name>
    <dbReference type="NCBI Taxonomy" id="9541"/>
    <lineage>
        <taxon>Eukaryota</taxon>
        <taxon>Metazoa</taxon>
        <taxon>Chordata</taxon>
        <taxon>Craniata</taxon>
        <taxon>Vertebrata</taxon>
        <taxon>Euteleostomi</taxon>
        <taxon>Mammalia</taxon>
        <taxon>Eutheria</taxon>
        <taxon>Euarchontoglires</taxon>
        <taxon>Primates</taxon>
        <taxon>Haplorrhini</taxon>
        <taxon>Catarrhini</taxon>
        <taxon>Cercopithecidae</taxon>
        <taxon>Cercopithecinae</taxon>
        <taxon>Macaca</taxon>
    </lineage>
</organism>
<protein>
    <recommendedName>
        <fullName>Prolyl endopeptidase-like</fullName>
        <ecNumber evidence="1">3.4.21.-</ecNumber>
    </recommendedName>
    <alternativeName>
        <fullName>Prolylendopeptidase-like</fullName>
    </alternativeName>
</protein>